<organism>
    <name type="scientific">Streptomyces avermitilis (strain ATCC 31267 / DSM 46492 / JCM 5070 / NBRC 14893 / NCIMB 12804 / NRRL 8165 / MA-4680)</name>
    <dbReference type="NCBI Taxonomy" id="227882"/>
    <lineage>
        <taxon>Bacteria</taxon>
        <taxon>Bacillati</taxon>
        <taxon>Actinomycetota</taxon>
        <taxon>Actinomycetes</taxon>
        <taxon>Kitasatosporales</taxon>
        <taxon>Streptomycetaceae</taxon>
        <taxon>Streptomyces</taxon>
    </lineage>
</organism>
<feature type="chain" id="PRO_0000175901" description="Probable transcriptional regulatory protein SAV_6832">
    <location>
        <begin position="1"/>
        <end position="250"/>
    </location>
</feature>
<proteinExistence type="inferred from homology"/>
<accession>Q827T9</accession>
<sequence>MSGHSKWATTKHKKAVIDAKRGKLFAKMIKNIEVAARTGGADPAGNPTLFDAIQKAKKSSVPNKNIDSAVKRGAGLEAGGADYETIMYEGYGPNGVAVLIECLTDNRNRAASDVRVAMTRNGGNMADPGSVSYLFNRKGVVIVPKGELSEDDVLGAVLDAGAEEVNDLGESFEVVSEATDLVAVRTALQDAGIDYDSADANFVPTMQVELDEEGARKIFKLIDALEDSDDVQNVFANFDVSDEVMEKVDA</sequence>
<dbReference type="EMBL" id="BA000030">
    <property type="protein sequence ID" value="BAC74543.1"/>
    <property type="molecule type" value="Genomic_DNA"/>
</dbReference>
<dbReference type="RefSeq" id="WP_010988230.1">
    <property type="nucleotide sequence ID" value="NZ_JZJK01000082.1"/>
</dbReference>
<dbReference type="SMR" id="Q827T9"/>
<dbReference type="GeneID" id="41543907"/>
<dbReference type="KEGG" id="sma:SAVERM_6832"/>
<dbReference type="eggNOG" id="COG0217">
    <property type="taxonomic scope" value="Bacteria"/>
</dbReference>
<dbReference type="HOGENOM" id="CLU_062974_2_2_11"/>
<dbReference type="OrthoDB" id="9781053at2"/>
<dbReference type="Proteomes" id="UP000000428">
    <property type="component" value="Chromosome"/>
</dbReference>
<dbReference type="GO" id="GO:0005829">
    <property type="term" value="C:cytosol"/>
    <property type="evidence" value="ECO:0007669"/>
    <property type="project" value="TreeGrafter"/>
</dbReference>
<dbReference type="GO" id="GO:0003677">
    <property type="term" value="F:DNA binding"/>
    <property type="evidence" value="ECO:0007669"/>
    <property type="project" value="UniProtKB-UniRule"/>
</dbReference>
<dbReference type="GO" id="GO:0006355">
    <property type="term" value="P:regulation of DNA-templated transcription"/>
    <property type="evidence" value="ECO:0007669"/>
    <property type="project" value="UniProtKB-UniRule"/>
</dbReference>
<dbReference type="FunFam" id="1.10.10.200:FF:000002">
    <property type="entry name" value="Probable transcriptional regulatory protein CLM62_37755"/>
    <property type="match status" value="1"/>
</dbReference>
<dbReference type="FunFam" id="3.30.70.980:FF:000006">
    <property type="entry name" value="Probable transcriptional regulatory protein J113_18170"/>
    <property type="match status" value="1"/>
</dbReference>
<dbReference type="Gene3D" id="1.10.10.200">
    <property type="match status" value="1"/>
</dbReference>
<dbReference type="Gene3D" id="3.30.70.980">
    <property type="match status" value="2"/>
</dbReference>
<dbReference type="HAMAP" id="MF_00693">
    <property type="entry name" value="Transcrip_reg_TACO1"/>
    <property type="match status" value="1"/>
</dbReference>
<dbReference type="InterPro" id="IPR017856">
    <property type="entry name" value="Integrase-like_N"/>
</dbReference>
<dbReference type="InterPro" id="IPR048300">
    <property type="entry name" value="TACO1_YebC-like_2nd/3rd_dom"/>
</dbReference>
<dbReference type="InterPro" id="IPR049083">
    <property type="entry name" value="TACO1_YebC_N"/>
</dbReference>
<dbReference type="InterPro" id="IPR002876">
    <property type="entry name" value="Transcrip_reg_TACO1-like"/>
</dbReference>
<dbReference type="InterPro" id="IPR026564">
    <property type="entry name" value="Transcrip_reg_TACO1-like_dom3"/>
</dbReference>
<dbReference type="InterPro" id="IPR029072">
    <property type="entry name" value="YebC-like"/>
</dbReference>
<dbReference type="NCBIfam" id="NF001030">
    <property type="entry name" value="PRK00110.1"/>
    <property type="match status" value="1"/>
</dbReference>
<dbReference type="NCBIfam" id="NF009044">
    <property type="entry name" value="PRK12378.1"/>
    <property type="match status" value="1"/>
</dbReference>
<dbReference type="NCBIfam" id="TIGR01033">
    <property type="entry name" value="YebC/PmpR family DNA-binding transcriptional regulator"/>
    <property type="match status" value="1"/>
</dbReference>
<dbReference type="PANTHER" id="PTHR12532:SF6">
    <property type="entry name" value="TRANSCRIPTIONAL REGULATORY PROTEIN YEBC-RELATED"/>
    <property type="match status" value="1"/>
</dbReference>
<dbReference type="PANTHER" id="PTHR12532">
    <property type="entry name" value="TRANSLATIONAL ACTIVATOR OF CYTOCHROME C OXIDASE 1"/>
    <property type="match status" value="1"/>
</dbReference>
<dbReference type="Pfam" id="PF20772">
    <property type="entry name" value="TACO1_YebC_N"/>
    <property type="match status" value="1"/>
</dbReference>
<dbReference type="Pfam" id="PF01709">
    <property type="entry name" value="Transcrip_reg"/>
    <property type="match status" value="1"/>
</dbReference>
<dbReference type="SUPFAM" id="SSF75625">
    <property type="entry name" value="YebC-like"/>
    <property type="match status" value="1"/>
</dbReference>
<gene>
    <name type="ordered locus">SAV_6832</name>
</gene>
<protein>
    <recommendedName>
        <fullName evidence="1">Probable transcriptional regulatory protein SAV_6832</fullName>
    </recommendedName>
</protein>
<name>Y6832_STRAW</name>
<reference key="1">
    <citation type="journal article" date="2001" name="Proc. Natl. Acad. Sci. U.S.A.">
        <title>Genome sequence of an industrial microorganism Streptomyces avermitilis: deducing the ability of producing secondary metabolites.</title>
        <authorList>
            <person name="Omura S."/>
            <person name="Ikeda H."/>
            <person name="Ishikawa J."/>
            <person name="Hanamoto A."/>
            <person name="Takahashi C."/>
            <person name="Shinose M."/>
            <person name="Takahashi Y."/>
            <person name="Horikawa H."/>
            <person name="Nakazawa H."/>
            <person name="Osonoe T."/>
            <person name="Kikuchi H."/>
            <person name="Shiba T."/>
            <person name="Sakaki Y."/>
            <person name="Hattori M."/>
        </authorList>
    </citation>
    <scope>NUCLEOTIDE SEQUENCE [LARGE SCALE GENOMIC DNA]</scope>
    <source>
        <strain>ATCC 31267 / DSM 46492 / JCM 5070 / NBRC 14893 / NCIMB 12804 / NRRL 8165 / MA-4680</strain>
    </source>
</reference>
<reference key="2">
    <citation type="journal article" date="2003" name="Nat. Biotechnol.">
        <title>Complete genome sequence and comparative analysis of the industrial microorganism Streptomyces avermitilis.</title>
        <authorList>
            <person name="Ikeda H."/>
            <person name="Ishikawa J."/>
            <person name="Hanamoto A."/>
            <person name="Shinose M."/>
            <person name="Kikuchi H."/>
            <person name="Shiba T."/>
            <person name="Sakaki Y."/>
            <person name="Hattori M."/>
            <person name="Omura S."/>
        </authorList>
    </citation>
    <scope>NUCLEOTIDE SEQUENCE [LARGE SCALE GENOMIC DNA]</scope>
    <source>
        <strain>ATCC 31267 / DSM 46492 / JCM 5070 / NBRC 14893 / NCIMB 12804 / NRRL 8165 / MA-4680</strain>
    </source>
</reference>
<keyword id="KW-0963">Cytoplasm</keyword>
<keyword id="KW-0238">DNA-binding</keyword>
<keyword id="KW-1185">Reference proteome</keyword>
<keyword id="KW-0804">Transcription</keyword>
<keyword id="KW-0805">Transcription regulation</keyword>
<evidence type="ECO:0000255" key="1">
    <source>
        <dbReference type="HAMAP-Rule" id="MF_00693"/>
    </source>
</evidence>
<comment type="subcellular location">
    <subcellularLocation>
        <location evidence="1">Cytoplasm</location>
    </subcellularLocation>
</comment>
<comment type="similarity">
    <text evidence="1">Belongs to the TACO1 family.</text>
</comment>